<feature type="chain" id="PRO_0000161063" description="Elongation factor Ts">
    <location>
        <begin position="1"/>
        <end position="308"/>
    </location>
</feature>
<feature type="region of interest" description="Involved in Mg(2+) ion dislocation from EF-Tu" evidence="1">
    <location>
        <begin position="80"/>
        <end position="83"/>
    </location>
</feature>
<accession>Q8UFM2</accession>
<sequence>MTEITAAMVKELREKSGAGMMDCKKALAETNGDMEAAIDWLRAKGIAKADKKSGRTAAEGLIGVATMGHKAVVVELNSETDFVARNDAFQDLIRGIAQVALTTDGTVDAVSAATYPATGKSVADSIKDAIATIGENMTLRRSAALEVPHGVVATYVHNAAGDGIGKLGVLVALKSEGDKAVLNSIGRQVAMHIAATNPLAIRAEEVDAAVAERERNVFIEQARESGKPEAIIEKMVDGRMRKFFEEVALLSQAFVINPDITVGAAIKEVEKEAGASIEVTGMVRLLLGEGVEKEESDFAAEVAAVAKG</sequence>
<dbReference type="EMBL" id="AE007869">
    <property type="protein sequence ID" value="AAK87167.2"/>
    <property type="molecule type" value="Genomic_DNA"/>
</dbReference>
<dbReference type="PIR" id="AG2745">
    <property type="entry name" value="AG2745"/>
</dbReference>
<dbReference type="PIR" id="F97526">
    <property type="entry name" value="F97526"/>
</dbReference>
<dbReference type="RefSeq" id="NP_354382.2">
    <property type="nucleotide sequence ID" value="NC_003062.2"/>
</dbReference>
<dbReference type="RefSeq" id="WP_006312544.1">
    <property type="nucleotide sequence ID" value="NC_003062.2"/>
</dbReference>
<dbReference type="SMR" id="Q8UFM2"/>
<dbReference type="STRING" id="176299.Atu1375"/>
<dbReference type="EnsemblBacteria" id="AAK87167">
    <property type="protein sequence ID" value="AAK87167"/>
    <property type="gene ID" value="Atu1375"/>
</dbReference>
<dbReference type="GeneID" id="1133413"/>
<dbReference type="KEGG" id="atu:Atu1375"/>
<dbReference type="PATRIC" id="fig|176299.10.peg.1398"/>
<dbReference type="eggNOG" id="COG0264">
    <property type="taxonomic scope" value="Bacteria"/>
</dbReference>
<dbReference type="HOGENOM" id="CLU_047155_2_0_5"/>
<dbReference type="OrthoDB" id="9808348at2"/>
<dbReference type="PhylomeDB" id="Q8UFM2"/>
<dbReference type="BioCyc" id="AGRO:ATU1375-MONOMER"/>
<dbReference type="Proteomes" id="UP000000813">
    <property type="component" value="Chromosome circular"/>
</dbReference>
<dbReference type="GO" id="GO:0005737">
    <property type="term" value="C:cytoplasm"/>
    <property type="evidence" value="ECO:0007669"/>
    <property type="project" value="UniProtKB-SubCell"/>
</dbReference>
<dbReference type="GO" id="GO:0003746">
    <property type="term" value="F:translation elongation factor activity"/>
    <property type="evidence" value="ECO:0007669"/>
    <property type="project" value="UniProtKB-UniRule"/>
</dbReference>
<dbReference type="CDD" id="cd14275">
    <property type="entry name" value="UBA_EF-Ts"/>
    <property type="match status" value="1"/>
</dbReference>
<dbReference type="FunFam" id="1.10.286.20:FF:000001">
    <property type="entry name" value="Elongation factor Ts"/>
    <property type="match status" value="1"/>
</dbReference>
<dbReference type="FunFam" id="1.10.8.10:FF:000001">
    <property type="entry name" value="Elongation factor Ts"/>
    <property type="match status" value="1"/>
</dbReference>
<dbReference type="Gene3D" id="1.10.286.20">
    <property type="match status" value="1"/>
</dbReference>
<dbReference type="Gene3D" id="1.10.8.10">
    <property type="entry name" value="DNA helicase RuvA subunit, C-terminal domain"/>
    <property type="match status" value="1"/>
</dbReference>
<dbReference type="Gene3D" id="3.30.479.20">
    <property type="entry name" value="Elongation factor Ts, dimerisation domain"/>
    <property type="match status" value="2"/>
</dbReference>
<dbReference type="HAMAP" id="MF_00050">
    <property type="entry name" value="EF_Ts"/>
    <property type="match status" value="1"/>
</dbReference>
<dbReference type="InterPro" id="IPR036402">
    <property type="entry name" value="EF-Ts_dimer_sf"/>
</dbReference>
<dbReference type="InterPro" id="IPR001816">
    <property type="entry name" value="Transl_elong_EFTs/EF1B"/>
</dbReference>
<dbReference type="InterPro" id="IPR014039">
    <property type="entry name" value="Transl_elong_EFTs/EF1B_dimer"/>
</dbReference>
<dbReference type="InterPro" id="IPR018101">
    <property type="entry name" value="Transl_elong_Ts_CS"/>
</dbReference>
<dbReference type="InterPro" id="IPR009060">
    <property type="entry name" value="UBA-like_sf"/>
</dbReference>
<dbReference type="NCBIfam" id="TIGR00116">
    <property type="entry name" value="tsf"/>
    <property type="match status" value="1"/>
</dbReference>
<dbReference type="PANTHER" id="PTHR11741">
    <property type="entry name" value="ELONGATION FACTOR TS"/>
    <property type="match status" value="1"/>
</dbReference>
<dbReference type="PANTHER" id="PTHR11741:SF0">
    <property type="entry name" value="ELONGATION FACTOR TS, MITOCHONDRIAL"/>
    <property type="match status" value="1"/>
</dbReference>
<dbReference type="Pfam" id="PF00889">
    <property type="entry name" value="EF_TS"/>
    <property type="match status" value="1"/>
</dbReference>
<dbReference type="SUPFAM" id="SSF54713">
    <property type="entry name" value="Elongation factor Ts (EF-Ts), dimerisation domain"/>
    <property type="match status" value="2"/>
</dbReference>
<dbReference type="SUPFAM" id="SSF46934">
    <property type="entry name" value="UBA-like"/>
    <property type="match status" value="1"/>
</dbReference>
<dbReference type="PROSITE" id="PS01126">
    <property type="entry name" value="EF_TS_1"/>
    <property type="match status" value="1"/>
</dbReference>
<dbReference type="PROSITE" id="PS01127">
    <property type="entry name" value="EF_TS_2"/>
    <property type="match status" value="1"/>
</dbReference>
<reference key="1">
    <citation type="journal article" date="2001" name="Science">
        <title>The genome of the natural genetic engineer Agrobacterium tumefaciens C58.</title>
        <authorList>
            <person name="Wood D.W."/>
            <person name="Setubal J.C."/>
            <person name="Kaul R."/>
            <person name="Monks D.E."/>
            <person name="Kitajima J.P."/>
            <person name="Okura V.K."/>
            <person name="Zhou Y."/>
            <person name="Chen L."/>
            <person name="Wood G.E."/>
            <person name="Almeida N.F. Jr."/>
            <person name="Woo L."/>
            <person name="Chen Y."/>
            <person name="Paulsen I.T."/>
            <person name="Eisen J.A."/>
            <person name="Karp P.D."/>
            <person name="Bovee D. Sr."/>
            <person name="Chapman P."/>
            <person name="Clendenning J."/>
            <person name="Deatherage G."/>
            <person name="Gillet W."/>
            <person name="Grant C."/>
            <person name="Kutyavin T."/>
            <person name="Levy R."/>
            <person name="Li M.-J."/>
            <person name="McClelland E."/>
            <person name="Palmieri A."/>
            <person name="Raymond C."/>
            <person name="Rouse G."/>
            <person name="Saenphimmachak C."/>
            <person name="Wu Z."/>
            <person name="Romero P."/>
            <person name="Gordon D."/>
            <person name="Zhang S."/>
            <person name="Yoo H."/>
            <person name="Tao Y."/>
            <person name="Biddle P."/>
            <person name="Jung M."/>
            <person name="Krespan W."/>
            <person name="Perry M."/>
            <person name="Gordon-Kamm B."/>
            <person name="Liao L."/>
            <person name="Kim S."/>
            <person name="Hendrick C."/>
            <person name="Zhao Z.-Y."/>
            <person name="Dolan M."/>
            <person name="Chumley F."/>
            <person name="Tingey S.V."/>
            <person name="Tomb J.-F."/>
            <person name="Gordon M.P."/>
            <person name="Olson M.V."/>
            <person name="Nester E.W."/>
        </authorList>
    </citation>
    <scope>NUCLEOTIDE SEQUENCE [LARGE SCALE GENOMIC DNA]</scope>
    <source>
        <strain>C58 / ATCC 33970</strain>
    </source>
</reference>
<reference key="2">
    <citation type="journal article" date="2001" name="Science">
        <title>Genome sequence of the plant pathogen and biotechnology agent Agrobacterium tumefaciens C58.</title>
        <authorList>
            <person name="Goodner B."/>
            <person name="Hinkle G."/>
            <person name="Gattung S."/>
            <person name="Miller N."/>
            <person name="Blanchard M."/>
            <person name="Qurollo B."/>
            <person name="Goldman B.S."/>
            <person name="Cao Y."/>
            <person name="Askenazi M."/>
            <person name="Halling C."/>
            <person name="Mullin L."/>
            <person name="Houmiel K."/>
            <person name="Gordon J."/>
            <person name="Vaudin M."/>
            <person name="Iartchouk O."/>
            <person name="Epp A."/>
            <person name="Liu F."/>
            <person name="Wollam C."/>
            <person name="Allinger M."/>
            <person name="Doughty D."/>
            <person name="Scott C."/>
            <person name="Lappas C."/>
            <person name="Markelz B."/>
            <person name="Flanagan C."/>
            <person name="Crowell C."/>
            <person name="Gurson J."/>
            <person name="Lomo C."/>
            <person name="Sear C."/>
            <person name="Strub G."/>
            <person name="Cielo C."/>
            <person name="Slater S."/>
        </authorList>
    </citation>
    <scope>NUCLEOTIDE SEQUENCE [LARGE SCALE GENOMIC DNA]</scope>
    <source>
        <strain>C58 / ATCC 33970</strain>
    </source>
</reference>
<organism>
    <name type="scientific">Agrobacterium fabrum (strain C58 / ATCC 33970)</name>
    <name type="common">Agrobacterium tumefaciens (strain C58)</name>
    <dbReference type="NCBI Taxonomy" id="176299"/>
    <lineage>
        <taxon>Bacteria</taxon>
        <taxon>Pseudomonadati</taxon>
        <taxon>Pseudomonadota</taxon>
        <taxon>Alphaproteobacteria</taxon>
        <taxon>Hyphomicrobiales</taxon>
        <taxon>Rhizobiaceae</taxon>
        <taxon>Rhizobium/Agrobacterium group</taxon>
        <taxon>Agrobacterium</taxon>
        <taxon>Agrobacterium tumefaciens complex</taxon>
    </lineage>
</organism>
<name>EFTS_AGRFC</name>
<comment type="function">
    <text evidence="1">Associates with the EF-Tu.GDP complex and induces the exchange of GDP to GTP. It remains bound to the aminoacyl-tRNA.EF-Tu.GTP complex up to the GTP hydrolysis stage on the ribosome.</text>
</comment>
<comment type="subcellular location">
    <subcellularLocation>
        <location evidence="1">Cytoplasm</location>
    </subcellularLocation>
</comment>
<comment type="similarity">
    <text evidence="1">Belongs to the EF-Ts family.</text>
</comment>
<protein>
    <recommendedName>
        <fullName evidence="1">Elongation factor Ts</fullName>
        <shortName evidence="1">EF-Ts</shortName>
    </recommendedName>
</protein>
<gene>
    <name evidence="1" type="primary">tsf</name>
    <name type="ordered locus">Atu1375</name>
    <name type="ORF">AGR_C_2541</name>
</gene>
<keyword id="KW-0963">Cytoplasm</keyword>
<keyword id="KW-0251">Elongation factor</keyword>
<keyword id="KW-0648">Protein biosynthesis</keyword>
<keyword id="KW-1185">Reference proteome</keyword>
<proteinExistence type="inferred from homology"/>
<evidence type="ECO:0000255" key="1">
    <source>
        <dbReference type="HAMAP-Rule" id="MF_00050"/>
    </source>
</evidence>